<feature type="signal peptide" evidence="1">
    <location>
        <begin position="1"/>
        <end position="20"/>
    </location>
</feature>
<feature type="chain" id="PRO_0000011723" description="Lutropin/choriogonadotropin subunit beta">
    <location>
        <begin position="21"/>
        <end position="169"/>
    </location>
</feature>
<feature type="region of interest" description="Disordered" evidence="3">
    <location>
        <begin position="131"/>
        <end position="169"/>
    </location>
</feature>
<feature type="compositionally biased region" description="Low complexity" evidence="3">
    <location>
        <begin position="145"/>
        <end position="154"/>
    </location>
</feature>
<feature type="compositionally biased region" description="Polar residues" evidence="3">
    <location>
        <begin position="155"/>
        <end position="169"/>
    </location>
</feature>
<feature type="glycosylation site" description="N-linked (GlcNAc...) asparagine" evidence="2">
    <location>
        <position position="33"/>
    </location>
</feature>
<feature type="glycosylation site" description="N-linked (GlcNAc...) asparagine" evidence="2">
    <location>
        <position position="158"/>
    </location>
</feature>
<feature type="disulfide bond" evidence="1">
    <location>
        <begin position="29"/>
        <end position="77"/>
    </location>
</feature>
<feature type="disulfide bond" evidence="1">
    <location>
        <begin position="43"/>
        <end position="92"/>
    </location>
</feature>
<feature type="disulfide bond" evidence="1">
    <location>
        <begin position="46"/>
        <end position="130"/>
    </location>
</feature>
<feature type="disulfide bond" evidence="1">
    <location>
        <begin position="54"/>
        <end position="108"/>
    </location>
</feature>
<feature type="disulfide bond" evidence="1">
    <location>
        <begin position="58"/>
        <end position="110"/>
    </location>
</feature>
<feature type="disulfide bond" evidence="1">
    <location>
        <begin position="113"/>
        <end position="120"/>
    </location>
</feature>
<accession>O46641</accession>
<dbReference type="EMBL" id="Y16265">
    <property type="protein sequence ID" value="CAA76146.1"/>
    <property type="molecule type" value="mRNA"/>
</dbReference>
<dbReference type="SMR" id="O46641"/>
<dbReference type="GlyCosmos" id="O46641">
    <property type="glycosylation" value="2 sites, No reported glycans"/>
</dbReference>
<dbReference type="GO" id="GO:0005737">
    <property type="term" value="C:cytoplasm"/>
    <property type="evidence" value="ECO:0007669"/>
    <property type="project" value="TreeGrafter"/>
</dbReference>
<dbReference type="GO" id="GO:0005615">
    <property type="term" value="C:extracellular space"/>
    <property type="evidence" value="ECO:0007669"/>
    <property type="project" value="TreeGrafter"/>
</dbReference>
<dbReference type="GO" id="GO:0005179">
    <property type="term" value="F:hormone activity"/>
    <property type="evidence" value="ECO:0007669"/>
    <property type="project" value="UniProtKB-KW"/>
</dbReference>
<dbReference type="GO" id="GO:0007186">
    <property type="term" value="P:G protein-coupled receptor signaling pathway"/>
    <property type="evidence" value="ECO:0007669"/>
    <property type="project" value="TreeGrafter"/>
</dbReference>
<dbReference type="CDD" id="cd00069">
    <property type="entry name" value="GHB_like"/>
    <property type="match status" value="1"/>
</dbReference>
<dbReference type="FunFam" id="2.10.90.10:FF:000007">
    <property type="entry name" value="Luteinizing hormone beta subunit"/>
    <property type="match status" value="1"/>
</dbReference>
<dbReference type="Gene3D" id="2.10.90.10">
    <property type="entry name" value="Cystine-knot cytokines"/>
    <property type="match status" value="1"/>
</dbReference>
<dbReference type="InterPro" id="IPR029034">
    <property type="entry name" value="Cystine-knot_cytokine"/>
</dbReference>
<dbReference type="InterPro" id="IPR006208">
    <property type="entry name" value="Glyco_hormone_CN"/>
</dbReference>
<dbReference type="InterPro" id="IPR001545">
    <property type="entry name" value="Gonadotropin_bsu"/>
</dbReference>
<dbReference type="InterPro" id="IPR018245">
    <property type="entry name" value="Gonadotropin_bsu_CS"/>
</dbReference>
<dbReference type="PANTHER" id="PTHR11515">
    <property type="entry name" value="GLYCOPROTEIN HORMONE BETA CHAIN"/>
    <property type="match status" value="1"/>
</dbReference>
<dbReference type="PANTHER" id="PTHR11515:SF11">
    <property type="entry name" value="LUTROPIN SUBUNIT BETA"/>
    <property type="match status" value="1"/>
</dbReference>
<dbReference type="Pfam" id="PF00007">
    <property type="entry name" value="Cys_knot"/>
    <property type="match status" value="1"/>
</dbReference>
<dbReference type="SMART" id="SM00068">
    <property type="entry name" value="GHB"/>
    <property type="match status" value="1"/>
</dbReference>
<dbReference type="SUPFAM" id="SSF57501">
    <property type="entry name" value="Cystine-knot cytokines"/>
    <property type="match status" value="1"/>
</dbReference>
<dbReference type="PROSITE" id="PS00261">
    <property type="entry name" value="GLYCO_HORMONE_BETA_1"/>
    <property type="match status" value="1"/>
</dbReference>
<dbReference type="PROSITE" id="PS00689">
    <property type="entry name" value="GLYCO_HORMONE_BETA_2"/>
    <property type="match status" value="1"/>
</dbReference>
<comment type="function">
    <text>Promotes spermatogenesis and ovulation by stimulating the testes and ovaries to synthesize steroids.</text>
</comment>
<comment type="subunit">
    <text>Heterodimer of a common alpha chain and a unique beta chain which confers biological specificity to thyrotropin, lutropin, follitropin and gonadotropin.</text>
</comment>
<comment type="subcellular location">
    <subcellularLocation>
        <location>Secreted</location>
    </subcellularLocation>
</comment>
<comment type="similarity">
    <text evidence="4">Belongs to the glycoprotein hormones subunit beta family.</text>
</comment>
<protein>
    <recommendedName>
        <fullName>Lutropin/choriogonadotropin subunit beta</fullName>
    </recommendedName>
    <alternativeName>
        <fullName>LSH-B/CG-B</fullName>
    </alternativeName>
    <alternativeName>
        <fullName>Luteinizing hormone subunit beta</fullName>
    </alternativeName>
    <alternativeName>
        <fullName>Lutropin/choriogonadotropin beta chain</fullName>
    </alternativeName>
</protein>
<evidence type="ECO:0000250" key="1"/>
<evidence type="ECO:0000255" key="2"/>
<evidence type="ECO:0000256" key="3">
    <source>
        <dbReference type="SAM" id="MobiDB-lite"/>
    </source>
</evidence>
<evidence type="ECO:0000305" key="4"/>
<sequence>MEMLQGLLLWMLLSVGGVWASRGPLRPLCRPINATLAAEKEACPICITFTTSICAGYCPSMVRVMPAALPPIPQPVCTYRELRFASIRLPGCPPGVDPMVSFPVALSCHCGPCRLKTTDCGGPRDHPLACAPQASSSSKDPPSQPLTSTSTPTPGASNRSSHPLPIKTS</sequence>
<reference key="1">
    <citation type="journal article" date="1999" name="J. Reprod. Fertil.">
        <title>Cloning, sequencing and functional expression of zebra (Equus burchelli) LH.</title>
        <authorList>
            <person name="Chopineau M."/>
            <person name="Martinat N."/>
            <person name="Pourchet C."/>
            <person name="Stewart F."/>
            <person name="Combarnous Y."/>
            <person name="Guillou F."/>
        </authorList>
    </citation>
    <scope>NUCLEOTIDE SEQUENCE [MRNA]</scope>
    <source>
        <tissue>Pituitary</tissue>
    </source>
</reference>
<keyword id="KW-1015">Disulfide bond</keyword>
<keyword id="KW-0325">Glycoprotein</keyword>
<keyword id="KW-0372">Hormone</keyword>
<keyword id="KW-0964">Secreted</keyword>
<keyword id="KW-0732">Signal</keyword>
<organism>
    <name type="scientific">Equus quagga burchellii</name>
    <name type="common">Burchell's zebra</name>
    <name type="synonym">Equus burchelli</name>
    <dbReference type="NCBI Taxonomy" id="89252"/>
    <lineage>
        <taxon>Eukaryota</taxon>
        <taxon>Metazoa</taxon>
        <taxon>Chordata</taxon>
        <taxon>Craniata</taxon>
        <taxon>Vertebrata</taxon>
        <taxon>Euteleostomi</taxon>
        <taxon>Mammalia</taxon>
        <taxon>Eutheria</taxon>
        <taxon>Laurasiatheria</taxon>
        <taxon>Perissodactyla</taxon>
        <taxon>Equidae</taxon>
        <taxon>Equus</taxon>
        <taxon>Equus quagga</taxon>
    </lineage>
</organism>
<gene>
    <name type="primary">LHB</name>
</gene>
<name>LSHB_EQUQB</name>
<proteinExistence type="evidence at transcript level"/>